<name>ZSWM8_MOUSE</name>
<organism>
    <name type="scientific">Mus musculus</name>
    <name type="common">Mouse</name>
    <dbReference type="NCBI Taxonomy" id="10090"/>
    <lineage>
        <taxon>Eukaryota</taxon>
        <taxon>Metazoa</taxon>
        <taxon>Chordata</taxon>
        <taxon>Craniata</taxon>
        <taxon>Vertebrata</taxon>
        <taxon>Euteleostomi</taxon>
        <taxon>Mammalia</taxon>
        <taxon>Eutheria</taxon>
        <taxon>Euarchontoglires</taxon>
        <taxon>Glires</taxon>
        <taxon>Rodentia</taxon>
        <taxon>Myomorpha</taxon>
        <taxon>Muroidea</taxon>
        <taxon>Muridae</taxon>
        <taxon>Murinae</taxon>
        <taxon>Mus</taxon>
        <taxon>Mus</taxon>
    </lineage>
</organism>
<accession>Q3UHH1</accession>
<accession>B2RX90</accession>
<accession>Q5U4B9</accession>
<accession>Q6PCY6</accession>
<accession>Q80Y41</accession>
<accession>Q8CE12</accession>
<accession>Q8CHC3</accession>
<accession>Q9D789</accession>
<keyword id="KW-0025">Alternative splicing</keyword>
<keyword id="KW-0963">Cytoplasm</keyword>
<keyword id="KW-0479">Metal-binding</keyword>
<keyword id="KW-0597">Phosphoprotein</keyword>
<keyword id="KW-1185">Reference proteome</keyword>
<keyword id="KW-0833">Ubl conjugation pathway</keyword>
<keyword id="KW-0862">Zinc</keyword>
<keyword id="KW-0863">Zinc-finger</keyword>
<evidence type="ECO:0000250" key="1">
    <source>
        <dbReference type="UniProtKB" id="A7E2V4"/>
    </source>
</evidence>
<evidence type="ECO:0000255" key="2">
    <source>
        <dbReference type="PROSITE-ProRule" id="PRU00325"/>
    </source>
</evidence>
<evidence type="ECO:0000256" key="3">
    <source>
        <dbReference type="SAM" id="MobiDB-lite"/>
    </source>
</evidence>
<evidence type="ECO:0000269" key="4">
    <source>
    </source>
</evidence>
<evidence type="ECO:0000269" key="5">
    <source>
    </source>
</evidence>
<evidence type="ECO:0000269" key="6">
    <source>
    </source>
</evidence>
<evidence type="ECO:0000269" key="7">
    <source>
    </source>
</evidence>
<evidence type="ECO:0000303" key="8">
    <source>
    </source>
</evidence>
<evidence type="ECO:0000303" key="9">
    <source>
    </source>
</evidence>
<evidence type="ECO:0000303" key="10">
    <source>
    </source>
</evidence>
<evidence type="ECO:0000303" key="11">
    <source>
    </source>
</evidence>
<evidence type="ECO:0000305" key="12"/>
<evidence type="ECO:0000305" key="13">
    <source>
    </source>
</evidence>
<evidence type="ECO:0007744" key="14">
    <source>
    </source>
</evidence>
<dbReference type="EMBL" id="AK009454">
    <property type="protein sequence ID" value="BAB26298.1"/>
    <property type="status" value="ALT_INIT"/>
    <property type="molecule type" value="mRNA"/>
</dbReference>
<dbReference type="EMBL" id="AK029263">
    <property type="protein sequence ID" value="BAC26361.1"/>
    <property type="molecule type" value="mRNA"/>
</dbReference>
<dbReference type="EMBL" id="AK147398">
    <property type="protein sequence ID" value="BAE27886.1"/>
    <property type="molecule type" value="mRNA"/>
</dbReference>
<dbReference type="EMBL" id="BC059058">
    <property type="protein sequence ID" value="AAH59058.1"/>
    <property type="molecule type" value="mRNA"/>
</dbReference>
<dbReference type="EMBL" id="BC085161">
    <property type="protein sequence ID" value="AAH85161.1"/>
    <property type="molecule type" value="mRNA"/>
</dbReference>
<dbReference type="EMBL" id="BC049362">
    <property type="protein sequence ID" value="AAH49362.1"/>
    <property type="molecule type" value="mRNA"/>
</dbReference>
<dbReference type="EMBL" id="BC151046">
    <property type="protein sequence ID" value="AAI51047.1"/>
    <property type="molecule type" value="mRNA"/>
</dbReference>
<dbReference type="EMBL" id="BC151056">
    <property type="protein sequence ID" value="AAI51057.1"/>
    <property type="molecule type" value="mRNA"/>
</dbReference>
<dbReference type="EMBL" id="BC151173">
    <property type="protein sequence ID" value="AAI51174.1"/>
    <property type="molecule type" value="mRNA"/>
</dbReference>
<dbReference type="EMBL" id="AB093273">
    <property type="protein sequence ID" value="BAC41457.3"/>
    <property type="molecule type" value="mRNA"/>
</dbReference>
<dbReference type="CCDS" id="CCDS36820.1">
    <molecule id="Q3UHH1-1"/>
</dbReference>
<dbReference type="CCDS" id="CCDS88587.1">
    <molecule id="Q3UHH1-2"/>
</dbReference>
<dbReference type="CCDS" id="CCDS88588.1">
    <molecule id="Q3UHH1-3"/>
</dbReference>
<dbReference type="RefSeq" id="NP_001239010.1">
    <molecule id="Q3UHH1-3"/>
    <property type="nucleotide sequence ID" value="NM_001252081.2"/>
</dbReference>
<dbReference type="RefSeq" id="NP_001239011.1">
    <molecule id="Q3UHH1-2"/>
    <property type="nucleotide sequence ID" value="NM_001252082.2"/>
</dbReference>
<dbReference type="RefSeq" id="NP_082272.1">
    <molecule id="Q3UHH1-1"/>
    <property type="nucleotide sequence ID" value="NM_027996.4"/>
</dbReference>
<dbReference type="SMR" id="Q3UHH1"/>
<dbReference type="BioGRID" id="234542">
    <property type="interactions" value="10"/>
</dbReference>
<dbReference type="FunCoup" id="Q3UHH1">
    <property type="interactions" value="1989"/>
</dbReference>
<dbReference type="IntAct" id="Q3UHH1">
    <property type="interactions" value="5"/>
</dbReference>
<dbReference type="MINT" id="Q3UHH1"/>
<dbReference type="STRING" id="10090.ENSMUSP00000022358"/>
<dbReference type="GlyGen" id="Q3UHH1">
    <property type="glycosylation" value="6 sites, 1 N-linked glycan (1 site), 1 O-linked glycan (1 site)"/>
</dbReference>
<dbReference type="iPTMnet" id="Q3UHH1"/>
<dbReference type="PhosphoSitePlus" id="Q3UHH1"/>
<dbReference type="jPOST" id="Q3UHH1"/>
<dbReference type="PaxDb" id="10090-ENSMUSP00000022358"/>
<dbReference type="PeptideAtlas" id="Q3UHH1"/>
<dbReference type="ProteomicsDB" id="275111">
    <molecule id="Q3UHH1-1"/>
</dbReference>
<dbReference type="ProteomicsDB" id="275112">
    <molecule id="Q3UHH1-2"/>
</dbReference>
<dbReference type="ProteomicsDB" id="275113">
    <molecule id="Q3UHH1-3"/>
</dbReference>
<dbReference type="ProteomicsDB" id="275114">
    <molecule id="Q3UHH1-4"/>
</dbReference>
<dbReference type="ProteomicsDB" id="275115">
    <molecule id="Q3UHH1-5"/>
</dbReference>
<dbReference type="Pumba" id="Q3UHH1"/>
<dbReference type="Antibodypedia" id="48437">
    <property type="antibodies" value="7 antibodies from 6 providers"/>
</dbReference>
<dbReference type="Ensembl" id="ENSMUST00000022358.9">
    <molecule id="Q3UHH1-1"/>
    <property type="protein sequence ID" value="ENSMUSP00000022358.8"/>
    <property type="gene ID" value="ENSMUSG00000021819.12"/>
</dbReference>
<dbReference type="Ensembl" id="ENSMUST00000223840.2">
    <molecule id="Q3UHH1-2"/>
    <property type="protein sequence ID" value="ENSMUSP00000153027.2"/>
    <property type="gene ID" value="ENSMUSG00000021819.12"/>
</dbReference>
<dbReference type="Ensembl" id="ENSMUST00000224751.2">
    <molecule id="Q3UHH1-3"/>
    <property type="protein sequence ID" value="ENSMUSP00000153285.2"/>
    <property type="gene ID" value="ENSMUSG00000021819.12"/>
</dbReference>
<dbReference type="GeneID" id="268721"/>
<dbReference type="KEGG" id="mmu:268721"/>
<dbReference type="UCSC" id="uc007sko.2">
    <molecule id="Q3UHH1-1"/>
    <property type="organism name" value="mouse"/>
</dbReference>
<dbReference type="UCSC" id="uc007skp.2">
    <molecule id="Q3UHH1-2"/>
    <property type="organism name" value="mouse"/>
</dbReference>
<dbReference type="UCSC" id="uc007skq.1">
    <molecule id="Q3UHH1-5"/>
    <property type="organism name" value="mouse"/>
</dbReference>
<dbReference type="UCSC" id="uc007skr.3">
    <molecule id="Q3UHH1-3"/>
    <property type="organism name" value="mouse"/>
</dbReference>
<dbReference type="AGR" id="MGI:1919156"/>
<dbReference type="CTD" id="23053"/>
<dbReference type="MGI" id="MGI:1919156">
    <property type="gene designation" value="Zswim8"/>
</dbReference>
<dbReference type="VEuPathDB" id="HostDB:ENSMUSG00000021819"/>
<dbReference type="eggNOG" id="KOG3615">
    <property type="taxonomic scope" value="Eukaryota"/>
</dbReference>
<dbReference type="GeneTree" id="ENSGT00940000156999"/>
<dbReference type="HOGENOM" id="CLU_001052_0_0_1"/>
<dbReference type="InParanoid" id="Q3UHH1"/>
<dbReference type="OMA" id="HNLSYPP"/>
<dbReference type="OrthoDB" id="10013584at2759"/>
<dbReference type="PhylomeDB" id="Q3UHH1"/>
<dbReference type="TreeFam" id="TF324881"/>
<dbReference type="UniPathway" id="UPA00143"/>
<dbReference type="BioGRID-ORCS" id="268721">
    <property type="hits" value="7 hits in 76 CRISPR screens"/>
</dbReference>
<dbReference type="ChiTaRS" id="Zswim8">
    <property type="organism name" value="mouse"/>
</dbReference>
<dbReference type="PRO" id="PR:Q3UHH1"/>
<dbReference type="Proteomes" id="UP000000589">
    <property type="component" value="Chromosome 14"/>
</dbReference>
<dbReference type="RNAct" id="Q3UHH1">
    <property type="molecule type" value="protein"/>
</dbReference>
<dbReference type="Bgee" id="ENSMUSG00000021819">
    <property type="expression patterns" value="Expressed in undifferentiated genital tubercle and 224 other cell types or tissues"/>
</dbReference>
<dbReference type="ExpressionAtlas" id="Q3UHH1">
    <property type="expression patterns" value="baseline and differential"/>
</dbReference>
<dbReference type="GO" id="GO:0031463">
    <property type="term" value="C:Cul3-RING ubiquitin ligase complex"/>
    <property type="evidence" value="ECO:0000250"/>
    <property type="project" value="UniProtKB"/>
</dbReference>
<dbReference type="GO" id="GO:0031461">
    <property type="term" value="C:cullin-RING ubiquitin ligase complex"/>
    <property type="evidence" value="ECO:0000314"/>
    <property type="project" value="UniProtKB"/>
</dbReference>
<dbReference type="GO" id="GO:0005829">
    <property type="term" value="C:cytosol"/>
    <property type="evidence" value="ECO:0000314"/>
    <property type="project" value="UniProtKB"/>
</dbReference>
<dbReference type="GO" id="GO:1990756">
    <property type="term" value="F:ubiquitin-like ligase-substrate adaptor activity"/>
    <property type="evidence" value="ECO:0000250"/>
    <property type="project" value="UniProtKB"/>
</dbReference>
<dbReference type="GO" id="GO:0008270">
    <property type="term" value="F:zinc ion binding"/>
    <property type="evidence" value="ECO:0007669"/>
    <property type="project" value="UniProtKB-KW"/>
</dbReference>
<dbReference type="GO" id="GO:2000627">
    <property type="term" value="P:positive regulation of miRNA catabolic process"/>
    <property type="evidence" value="ECO:0000314"/>
    <property type="project" value="UniProtKB"/>
</dbReference>
<dbReference type="GO" id="GO:0043161">
    <property type="term" value="P:proteasome-mediated ubiquitin-dependent protein catabolic process"/>
    <property type="evidence" value="ECO:0000250"/>
    <property type="project" value="UniProtKB"/>
</dbReference>
<dbReference type="GO" id="GO:0016567">
    <property type="term" value="P:protein ubiquitination"/>
    <property type="evidence" value="ECO:0000250"/>
    <property type="project" value="UniProtKB"/>
</dbReference>
<dbReference type="InterPro" id="IPR007527">
    <property type="entry name" value="Znf_SWIM"/>
</dbReference>
<dbReference type="InterPro" id="IPR048370">
    <property type="entry name" value="ZSWIM4-8_C"/>
</dbReference>
<dbReference type="PANTHER" id="PTHR22619">
    <property type="entry name" value="ZINC FINGER SWIM DOMAIN CONTAINING PROTEIN 4, 5, 6"/>
    <property type="match status" value="1"/>
</dbReference>
<dbReference type="PANTHER" id="PTHR22619:SF1">
    <property type="entry name" value="ZINC FINGER SWIM DOMAIN-CONTAINING PROTEIN 8"/>
    <property type="match status" value="1"/>
</dbReference>
<dbReference type="Pfam" id="PF21055">
    <property type="entry name" value="ZSWIM4-8_C"/>
    <property type="match status" value="1"/>
</dbReference>
<dbReference type="PROSITE" id="PS50966">
    <property type="entry name" value="ZF_SWIM"/>
    <property type="match status" value="1"/>
</dbReference>
<proteinExistence type="evidence at protein level"/>
<protein>
    <recommendedName>
        <fullName evidence="12">Zinc finger SWIM domain-containing protein 8</fullName>
    </recommendedName>
</protein>
<sequence length="1832" mass="197061">MELMFAEWEDGERFSFEDSDRFEEDSLCSFISEAESLCQNWRGWRKQSAGPNSPTGGGGGGGSGGTRTRDGLVIPLVELSAKQVAFHIPFEVVEKVYPPVPEQLQLRIAFWSFPENEEDIRLYSCLANGSADEFQRGDQLFRMRAVKDPLQIGFHLSATVVPPQMVPPKGAYNVAVMFDRCRVTSCSCTCGAGAKWCTHVVALCLFRIHNASAVCLRAPVSESLSRLQRDQLQKFAQYLISELPQQILPTAQRLLDELLSSQSTAINTVCGAPDPTAGPSASDQSTWYLDESTLTDNIKKTLHKFCGPSPVVFSDVNSMYLSSTEPPAAAEWACLLRPLRGREPEGVWNLLSIVREMFKRRDSNAAPLLEILTDQCLTYEQITGWWYSVRTSASHSSASGHTGRSNGQSEVAAHACASMCDEMVTLWRLAVLDPALSPQRRRELCAQLRQWQLKVIENVKRGQHKKTLERLFPGFRPAVEACYFNWEEAYPLPGVTYSGTDRKLALCWARALPARPGASRSGGLEESRPRPLPTEPAVRPKEPGAKRKGLGEGISSQRGPRRLSAEGGDKALHKMGPSGGKAKVLGGTGSGGKSSAGSGSKRRLSSEDSSLEPDLAEMSLDDSSLALGAEASTFGGFPESPPPCPSSVGSRGPSTFLPEPPDTYEEDAGVYFSEGPEPPTASADHPGLLPGEVCTRDDLPSTDDSGSGLHKTKEAAPAVGEEDDDYQAYYLNAQDGAGGEEEKAEGGTGEEHDLFAGLKPLEQESRMEVLFACAEALHAHGYSNEASRLTVELAQDLLANPPDLKVEPPPAKGKKNKVSTSRQTWVATNTLTKAAFLLTVLSERPEHHSLAFRVGMFALELQRPPASTKALEVKLAYQESEVAALLKKIPRGPSEMSTIRCRAEELREGTLCDYRPVLPLMLASFIFDVLCAPVVSLTGSRPPSRNWTNEMPGDEELGFEAAVAALGMKTTVSEAEHPLLCEGTRREKGDLALALMITYKDDQAKLKKILDKLLDRESQTHKPQTLSSFYSSSRPATANQRSPSKHGAPSAPGALQPLTSSSAGPAQPGNVAGAGPGPTEGFTEKNVPESSPHSPCEGLPPEAALTPRPEGKVPSRLALGSRGGYNGRGWGSPGRPKKKHTGMASIDSSAPETTSDSSPTLSRRPLRGGWAPTSWGRGQDSDSISSSSSDSLGSSSSSGSRRASASGGARAKTVDVGRCYKGRRPESHAPHVPNQPSEAAAHFYFELAKTVLIKAGGNSSTSIFTHPSSSGGHQGPHRNLHLCAFEIGLYALGLHNFVSPNWLSRTYSSHVSWITGQAMEIGSAALTILVECWDGHLTPPEVASLADRASRARDSNMVRAAAELALSCLPHAHALNPNEIQRALVQCKEQDNLMLEKACMAVEEAAKGGGVYPEVLFEVAHQWFWLYEETAGGSSTAREGATSCSGSGMRAAGEAGRGLPEGRGAPGTEPVTVAAAAVTAAATVVPVISVGSSLYPGPGLGHGHSPGLHPYTALQPHLPCSPQYLTHPAHPAHPMPHMPRPAVFPVPSSAYPQGVHPAFLGAQYPYSVTPPSLAATAVSFPVPSMAPITVHPYHTEPGLPLPTSVALSSVHPASTFPAIQGASLPALTTQPSPLVSGGFPPPEEETHSQPVNPHSLHHLHAAYRVGMLALEMLGRRAHNDHPNNFSRSPPYTDDVKWLLGLAAKLGVNYVHQFCVGAAKGVLSPFVLQEIVMETLQRLNPIHAHNHLRAPAFHQLVQRCQQAYMQYIHHRLIHLTPADYDDFVNAIRSARSAFCLTPMGMMQFNDILQNLKRSKQTKELWQRVSLEITTFSP</sequence>
<feature type="chain" id="PRO_0000311803" description="Zinc finger SWIM domain-containing protein 8">
    <location>
        <begin position="1"/>
        <end position="1832"/>
    </location>
</feature>
<feature type="zinc finger region" description="SWIM-type" evidence="2">
    <location>
        <begin position="172"/>
        <end position="208"/>
    </location>
</feature>
<feature type="region of interest" description="Disordered" evidence="3">
    <location>
        <begin position="45"/>
        <end position="67"/>
    </location>
</feature>
<feature type="region of interest" description="Disordered" evidence="3">
    <location>
        <begin position="516"/>
        <end position="722"/>
    </location>
</feature>
<feature type="region of interest" description="Disordered" evidence="3">
    <location>
        <begin position="800"/>
        <end position="821"/>
    </location>
</feature>
<feature type="region of interest" description="Disordered" evidence="3">
    <location>
        <begin position="1018"/>
        <end position="1216"/>
    </location>
</feature>
<feature type="region of interest" description="Disordered" evidence="3">
    <location>
        <begin position="1435"/>
        <end position="1465"/>
    </location>
</feature>
<feature type="compositionally biased region" description="Gly residues" evidence="3">
    <location>
        <begin position="55"/>
        <end position="65"/>
    </location>
</feature>
<feature type="compositionally biased region" description="Basic and acidic residues" evidence="3">
    <location>
        <begin position="563"/>
        <end position="572"/>
    </location>
</feature>
<feature type="compositionally biased region" description="Polar residues" evidence="3">
    <location>
        <begin position="1021"/>
        <end position="1042"/>
    </location>
</feature>
<feature type="compositionally biased region" description="Gly residues" evidence="3">
    <location>
        <begin position="1121"/>
        <end position="1132"/>
    </location>
</feature>
<feature type="compositionally biased region" description="Polar residues" evidence="3">
    <location>
        <begin position="1146"/>
        <end position="1161"/>
    </location>
</feature>
<feature type="compositionally biased region" description="Low complexity" evidence="3">
    <location>
        <begin position="1176"/>
        <end position="1211"/>
    </location>
</feature>
<feature type="compositionally biased region" description="Polar residues" evidence="3">
    <location>
        <begin position="1435"/>
        <end position="1446"/>
    </location>
</feature>
<feature type="compositionally biased region" description="Gly residues" evidence="3">
    <location>
        <begin position="1455"/>
        <end position="1465"/>
    </location>
</feature>
<feature type="modified residue" description="Phosphoserine" evidence="1">
    <location>
        <position position="36"/>
    </location>
</feature>
<feature type="modified residue" description="Phosphoserine" evidence="14">
    <location>
        <position position="48"/>
    </location>
</feature>
<feature type="modified residue" description="Phosphoserine" evidence="14">
    <location>
        <position position="53"/>
    </location>
</feature>
<feature type="modified residue" description="Phosphoserine" evidence="1">
    <location>
        <position position="437"/>
    </location>
</feature>
<feature type="modified residue" description="Phosphoserine" evidence="1">
    <location>
        <position position="564"/>
    </location>
</feature>
<feature type="modified residue" description="Phosphothreonine" evidence="1">
    <location>
        <position position="1141"/>
    </location>
</feature>
<feature type="modified residue" description="Phosphoserine" evidence="14">
    <location>
        <position position="1155"/>
    </location>
</feature>
<feature type="modified residue" description="Phosphoserine" evidence="14">
    <location>
        <position position="1158"/>
    </location>
</feature>
<feature type="modified residue" description="Phosphoserine" evidence="1">
    <location>
        <position position="1162"/>
    </location>
</feature>
<feature type="modified residue" description="Phosphoserine" evidence="1">
    <location>
        <position position="1270"/>
    </location>
</feature>
<feature type="modified residue" description="Phosphoserine" evidence="1">
    <location>
        <position position="1831"/>
    </location>
</feature>
<feature type="splice variant" id="VSP_029592" description="In isoform 4." evidence="9">
    <location>
        <begin position="1"/>
        <end position="895"/>
    </location>
</feature>
<feature type="splice variant" id="VSP_029593" description="In isoform 5." evidence="10">
    <location>
        <begin position="1"/>
        <end position="121"/>
    </location>
</feature>
<feature type="splice variant" id="VSP_029594" description="In isoform 5." evidence="10">
    <original>LYSCL</original>
    <variation>MKRTF</variation>
    <location>
        <begin position="122"/>
        <end position="126"/>
    </location>
</feature>
<feature type="splice variant" id="VSP_029595" description="In isoform 2." evidence="9">
    <location>
        <begin position="669"/>
        <end position="702"/>
    </location>
</feature>
<feature type="splice variant" id="VSP_029596" description="In isoform 5." evidence="10">
    <original>LF</original>
    <variation>RG</variation>
    <location>
        <begin position="770"/>
        <end position="771"/>
    </location>
</feature>
<feature type="splice variant" id="VSP_029597" description="In isoform 5." evidence="10">
    <location>
        <begin position="772"/>
        <end position="1832"/>
    </location>
</feature>
<feature type="splice variant" id="VSP_029598" description="In isoform 3." evidence="9">
    <location>
        <begin position="806"/>
        <end position="812"/>
    </location>
</feature>
<feature type="splice variant" id="VSP_029599" description="In isoform 4." evidence="9">
    <original>VNYVHQFCVGAAKGVLSPFVLQEIVMET</original>
    <variation>NTSPPQDHCPPVSLPFLSQTSFLALTQS</variation>
    <location>
        <begin position="1707"/>
        <end position="1734"/>
    </location>
</feature>
<feature type="splice variant" id="VSP_029600" description="In isoform 4." evidence="9">
    <location>
        <begin position="1735"/>
        <end position="1832"/>
    </location>
</feature>
<feature type="sequence conflict" description="In Ref. 1; BAC26361." evidence="12" ref="1">
    <original>G</original>
    <variation>E</variation>
    <location>
        <position position="599"/>
    </location>
</feature>
<feature type="sequence conflict" description="In Ref. 3; BAC41457." evidence="12" ref="3">
    <original>QA</original>
    <variation>KS</variation>
    <location>
        <begin position="1317"/>
        <end position="1318"/>
    </location>
</feature>
<feature type="sequence conflict" description="In Ref. 2; AAH59058." evidence="12" ref="2">
    <original>R</original>
    <variation>L</variation>
    <location>
        <position position="1664"/>
    </location>
</feature>
<gene>
    <name evidence="11" type="primary">Zswim8</name>
    <name evidence="8" type="synonym">Kiaa0913</name>
</gene>
<comment type="function">
    <text evidence="1 5 6 7">Substrate recognition component of a SCF-like E3 ubiquitin-protein ligase complex that promotes target-directed microRNA degradation (TDMD), a process that mediates degradation of microRNAs (miRNAs) (PubMed:33184237, PubMed:37532519). The SCF-like E3 ubiquitin-protein ligase complex acts by catalyzing ubiquitination and subsequent degradation of AGO proteins (AGO1, AGO2, AGO3 and/or AGO4), thereby exposing miRNAs for degradation (By similarity). Specifically recognizes and binds AGO proteins when they are engaged with a TDMD target (By similarity). May also acts as a regulator of axon guidance: specifically recognizes misfolded ROBO3 and promotes its ubiquitination and subsequent degradation (By similarity). Plays an essential role for proper embryonic development of heart and lung (PubMed:37532519). Controls protein quality of DAB1, a key signal molecule for brain development, thus protecting its signaling strength. Mechanistically, recognizes intrinsically disordered regions of DAB1 and eliminates misfolded DAB1 that cannot be properly phosphorylated (PubMed:35989311).</text>
</comment>
<comment type="pathway">
    <text evidence="1">Protein modification; protein ubiquitination.</text>
</comment>
<comment type="subunit">
    <text evidence="6 13">Component of the SCF-like E3 ubiquitin-protein ligase complex which contains CUL3, RBX1, ELOB, ELOC and ZSWIM8. Interacts with DAB1 (PubMed:35989311).</text>
</comment>
<comment type="subcellular location">
    <subcellularLocation>
        <location evidence="4 6">Cytoplasm</location>
        <location evidence="4 6">Cytosol</location>
    </subcellularLocation>
    <text evidence="6">Translocates together with its substrate into stress granules (SGs) under proteostatic stress.</text>
</comment>
<comment type="alternative products">
    <event type="alternative splicing"/>
    <isoform>
        <id>Q3UHH1-1</id>
        <name>1</name>
        <sequence type="displayed"/>
    </isoform>
    <isoform>
        <id>Q3UHH1-2</id>
        <name>2</name>
        <sequence type="described" ref="VSP_029595"/>
    </isoform>
    <isoform>
        <id>Q3UHH1-3</id>
        <name>3</name>
        <sequence type="described" ref="VSP_029598"/>
    </isoform>
    <isoform>
        <id>Q3UHH1-4</id>
        <name>4</name>
        <sequence type="described" ref="VSP_029592 VSP_029599 VSP_029600"/>
    </isoform>
    <isoform>
        <id>Q3UHH1-5</id>
        <name>5</name>
        <sequence type="described" ref="VSP_029593 VSP_029594 VSP_029596 VSP_029597"/>
    </isoform>
</comment>
<comment type="disruption phenotype">
    <text evidence="7">Zswim8-deletion embryos are smaller than their littermates and die near the time of birth. These mice fail to achieve proper oxygenation after birth.</text>
</comment>
<comment type="similarity">
    <text evidence="12">Belongs to the ZSWIM8 family.</text>
</comment>
<comment type="sequence caution" evidence="12">
    <conflict type="erroneous initiation">
        <sequence resource="EMBL-CDS" id="BAB26298"/>
    </conflict>
    <text>Truncated N-terminus.</text>
</comment>
<reference key="1">
    <citation type="journal article" date="2005" name="Science">
        <title>The transcriptional landscape of the mammalian genome.</title>
        <authorList>
            <person name="Carninci P."/>
            <person name="Kasukawa T."/>
            <person name="Katayama S."/>
            <person name="Gough J."/>
            <person name="Frith M.C."/>
            <person name="Maeda N."/>
            <person name="Oyama R."/>
            <person name="Ravasi T."/>
            <person name="Lenhard B."/>
            <person name="Wells C."/>
            <person name="Kodzius R."/>
            <person name="Shimokawa K."/>
            <person name="Bajic V.B."/>
            <person name="Brenner S.E."/>
            <person name="Batalov S."/>
            <person name="Forrest A.R."/>
            <person name="Zavolan M."/>
            <person name="Davis M.J."/>
            <person name="Wilming L.G."/>
            <person name="Aidinis V."/>
            <person name="Allen J.E."/>
            <person name="Ambesi-Impiombato A."/>
            <person name="Apweiler R."/>
            <person name="Aturaliya R.N."/>
            <person name="Bailey T.L."/>
            <person name="Bansal M."/>
            <person name="Baxter L."/>
            <person name="Beisel K.W."/>
            <person name="Bersano T."/>
            <person name="Bono H."/>
            <person name="Chalk A.M."/>
            <person name="Chiu K.P."/>
            <person name="Choudhary V."/>
            <person name="Christoffels A."/>
            <person name="Clutterbuck D.R."/>
            <person name="Crowe M.L."/>
            <person name="Dalla E."/>
            <person name="Dalrymple B.P."/>
            <person name="de Bono B."/>
            <person name="Della Gatta G."/>
            <person name="di Bernardo D."/>
            <person name="Down T."/>
            <person name="Engstrom P."/>
            <person name="Fagiolini M."/>
            <person name="Faulkner G."/>
            <person name="Fletcher C.F."/>
            <person name="Fukushima T."/>
            <person name="Furuno M."/>
            <person name="Futaki S."/>
            <person name="Gariboldi M."/>
            <person name="Georgii-Hemming P."/>
            <person name="Gingeras T.R."/>
            <person name="Gojobori T."/>
            <person name="Green R.E."/>
            <person name="Gustincich S."/>
            <person name="Harbers M."/>
            <person name="Hayashi Y."/>
            <person name="Hensch T.K."/>
            <person name="Hirokawa N."/>
            <person name="Hill D."/>
            <person name="Huminiecki L."/>
            <person name="Iacono M."/>
            <person name="Ikeo K."/>
            <person name="Iwama A."/>
            <person name="Ishikawa T."/>
            <person name="Jakt M."/>
            <person name="Kanapin A."/>
            <person name="Katoh M."/>
            <person name="Kawasawa Y."/>
            <person name="Kelso J."/>
            <person name="Kitamura H."/>
            <person name="Kitano H."/>
            <person name="Kollias G."/>
            <person name="Krishnan S.P."/>
            <person name="Kruger A."/>
            <person name="Kummerfeld S.K."/>
            <person name="Kurochkin I.V."/>
            <person name="Lareau L.F."/>
            <person name="Lazarevic D."/>
            <person name="Lipovich L."/>
            <person name="Liu J."/>
            <person name="Liuni S."/>
            <person name="McWilliam S."/>
            <person name="Madan Babu M."/>
            <person name="Madera M."/>
            <person name="Marchionni L."/>
            <person name="Matsuda H."/>
            <person name="Matsuzawa S."/>
            <person name="Miki H."/>
            <person name="Mignone F."/>
            <person name="Miyake S."/>
            <person name="Morris K."/>
            <person name="Mottagui-Tabar S."/>
            <person name="Mulder N."/>
            <person name="Nakano N."/>
            <person name="Nakauchi H."/>
            <person name="Ng P."/>
            <person name="Nilsson R."/>
            <person name="Nishiguchi S."/>
            <person name="Nishikawa S."/>
            <person name="Nori F."/>
            <person name="Ohara O."/>
            <person name="Okazaki Y."/>
            <person name="Orlando V."/>
            <person name="Pang K.C."/>
            <person name="Pavan W.J."/>
            <person name="Pavesi G."/>
            <person name="Pesole G."/>
            <person name="Petrovsky N."/>
            <person name="Piazza S."/>
            <person name="Reed J."/>
            <person name="Reid J.F."/>
            <person name="Ring B.Z."/>
            <person name="Ringwald M."/>
            <person name="Rost B."/>
            <person name="Ruan Y."/>
            <person name="Salzberg S.L."/>
            <person name="Sandelin A."/>
            <person name="Schneider C."/>
            <person name="Schoenbach C."/>
            <person name="Sekiguchi K."/>
            <person name="Semple C.A."/>
            <person name="Seno S."/>
            <person name="Sessa L."/>
            <person name="Sheng Y."/>
            <person name="Shibata Y."/>
            <person name="Shimada H."/>
            <person name="Shimada K."/>
            <person name="Silva D."/>
            <person name="Sinclair B."/>
            <person name="Sperling S."/>
            <person name="Stupka E."/>
            <person name="Sugiura K."/>
            <person name="Sultana R."/>
            <person name="Takenaka Y."/>
            <person name="Taki K."/>
            <person name="Tammoja K."/>
            <person name="Tan S.L."/>
            <person name="Tang S."/>
            <person name="Taylor M.S."/>
            <person name="Tegner J."/>
            <person name="Teichmann S.A."/>
            <person name="Ueda H.R."/>
            <person name="van Nimwegen E."/>
            <person name="Verardo R."/>
            <person name="Wei C.L."/>
            <person name="Yagi K."/>
            <person name="Yamanishi H."/>
            <person name="Zabarovsky E."/>
            <person name="Zhu S."/>
            <person name="Zimmer A."/>
            <person name="Hide W."/>
            <person name="Bult C."/>
            <person name="Grimmond S.M."/>
            <person name="Teasdale R.D."/>
            <person name="Liu E.T."/>
            <person name="Brusic V."/>
            <person name="Quackenbush J."/>
            <person name="Wahlestedt C."/>
            <person name="Mattick J.S."/>
            <person name="Hume D.A."/>
            <person name="Kai C."/>
            <person name="Sasaki D."/>
            <person name="Tomaru Y."/>
            <person name="Fukuda S."/>
            <person name="Kanamori-Katayama M."/>
            <person name="Suzuki M."/>
            <person name="Aoki J."/>
            <person name="Arakawa T."/>
            <person name="Iida J."/>
            <person name="Imamura K."/>
            <person name="Itoh M."/>
            <person name="Kato T."/>
            <person name="Kawaji H."/>
            <person name="Kawagashira N."/>
            <person name="Kawashima T."/>
            <person name="Kojima M."/>
            <person name="Kondo S."/>
            <person name="Konno H."/>
            <person name="Nakano K."/>
            <person name="Ninomiya N."/>
            <person name="Nishio T."/>
            <person name="Okada M."/>
            <person name="Plessy C."/>
            <person name="Shibata K."/>
            <person name="Shiraki T."/>
            <person name="Suzuki S."/>
            <person name="Tagami M."/>
            <person name="Waki K."/>
            <person name="Watahiki A."/>
            <person name="Okamura-Oho Y."/>
            <person name="Suzuki H."/>
            <person name="Kawai J."/>
            <person name="Hayashizaki Y."/>
        </authorList>
    </citation>
    <scope>NUCLEOTIDE SEQUENCE [LARGE SCALE MRNA] (ISOFORMS 1 AND 5)</scope>
    <source>
        <strain>C57BL/6J</strain>
        <tissue>Head</tissue>
        <tissue>Tongue</tissue>
    </source>
</reference>
<reference key="2">
    <citation type="journal article" date="2004" name="Genome Res.">
        <title>The status, quality, and expansion of the NIH full-length cDNA project: the Mammalian Gene Collection (MGC).</title>
        <authorList>
            <consortium name="The MGC Project Team"/>
        </authorList>
    </citation>
    <scope>NUCLEOTIDE SEQUENCE [LARGE SCALE MRNA] (ISOFORMS 1 AND 4)</scope>
    <scope>NUCLEOTIDE SEQUENCE [LARGE SCALE MRNA] OF 64-1832 (ISOFORM 2)</scope>
    <scope>NUCLEOTIDE SEQUENCE [LARGE SCALE MRNA] OF 622-1832 (ISOFORM 3)</scope>
    <source>
        <strain>C57BL/6J</strain>
        <tissue>Brain</tissue>
        <tissue>Eye</tissue>
    </source>
</reference>
<reference key="3">
    <citation type="journal article" date="2002" name="DNA Res.">
        <title>Prediction of the coding sequences of mouse homologues of KIAA gene: I. The complete nucleotide sequences of 100 mouse KIAA-homologous cDNAs identified by screening of terminal sequences of cDNA clones randomly sampled from size-fractionated libraries.</title>
        <authorList>
            <person name="Okazaki N."/>
            <person name="Kikuno R."/>
            <person name="Ohara R."/>
            <person name="Inamoto S."/>
            <person name="Hara Y."/>
            <person name="Nagase T."/>
            <person name="Ohara O."/>
            <person name="Koga H."/>
        </authorList>
    </citation>
    <scope>NUCLEOTIDE SEQUENCE [LARGE SCALE MRNA] OF 769-1559 (ISOFORMS 1/2)</scope>
    <source>
        <tissue>Brain</tissue>
    </source>
</reference>
<reference key="4">
    <citation type="submission" date="2003-06" db="EMBL/GenBank/DDBJ databases">
        <authorList>
            <person name="Okazaki N."/>
            <person name="Kikuno R."/>
            <person name="Nagase T."/>
            <person name="Ohara O."/>
            <person name="Koga H."/>
        </authorList>
    </citation>
    <scope>SEQUENCE REVISION</scope>
</reference>
<reference key="5">
    <citation type="journal article" date="2007" name="Proc. Natl. Acad. Sci. U.S.A.">
        <title>Large-scale phosphorylation analysis of mouse liver.</title>
        <authorList>
            <person name="Villen J."/>
            <person name="Beausoleil S.A."/>
            <person name="Gerber S.A."/>
            <person name="Gygi S.P."/>
        </authorList>
    </citation>
    <scope>IDENTIFICATION BY MASS SPECTROMETRY [LARGE SCALE ANALYSIS]</scope>
    <source>
        <tissue>Liver</tissue>
    </source>
</reference>
<reference key="6">
    <citation type="journal article" date="2010" name="Cell">
        <title>A tissue-specific atlas of mouse protein phosphorylation and expression.</title>
        <authorList>
            <person name="Huttlin E.L."/>
            <person name="Jedrychowski M.P."/>
            <person name="Elias J.E."/>
            <person name="Goswami T."/>
            <person name="Rad R."/>
            <person name="Beausoleil S.A."/>
            <person name="Villen J."/>
            <person name="Haas W."/>
            <person name="Sowa M.E."/>
            <person name="Gygi S.P."/>
        </authorList>
    </citation>
    <scope>PHOSPHORYLATION [LARGE SCALE ANALYSIS] AT SER-48; SER-53; SER-1155 AND SER-1158</scope>
    <scope>IDENTIFICATION BY MASS SPECTROMETRY [LARGE SCALE ANALYSIS]</scope>
    <source>
        <tissue>Brain</tissue>
        <tissue>Kidney</tissue>
        <tissue>Liver</tissue>
        <tissue>Pancreas</tissue>
        <tissue>Spleen</tissue>
        <tissue>Testis</tissue>
    </source>
</reference>
<reference key="7">
    <citation type="journal article" date="2013" name="Neuron">
        <title>The EBAX-type Cullin-RING E3 ligase and Hsp90 guard the protein quality of the SAX-3/Robo receptor in developing neurons.</title>
        <authorList>
            <person name="Wang Z."/>
            <person name="Hou Y."/>
            <person name="Guo X."/>
            <person name="van der Voet M."/>
            <person name="Boxem M."/>
            <person name="Dixon J.E."/>
            <person name="Chisholm A.D."/>
            <person name="Jin Y."/>
        </authorList>
    </citation>
    <scope>IDENTIFICATION IN A SCF-LIKE E3 UBIQUITIN-PROTEIN LIGASE COMPLEX</scope>
    <scope>SUBCELLULAR LOCATION</scope>
</reference>
<reference key="8">
    <citation type="journal article" date="2014" name="Mol. Cell. Proteomics">
        <title>Immunoaffinity enrichment and mass spectrometry analysis of protein methylation.</title>
        <authorList>
            <person name="Guo A."/>
            <person name="Gu H."/>
            <person name="Zhou J."/>
            <person name="Mulhern D."/>
            <person name="Wang Y."/>
            <person name="Lee K.A."/>
            <person name="Yang V."/>
            <person name="Aguiar M."/>
            <person name="Kornhauser J."/>
            <person name="Jia X."/>
            <person name="Ren J."/>
            <person name="Beausoleil S.A."/>
            <person name="Silva J.C."/>
            <person name="Vemulapalli V."/>
            <person name="Bedford M.T."/>
            <person name="Comb M.J."/>
        </authorList>
    </citation>
    <scope>IDENTIFICATION BY MASS SPECTROMETRY [LARGE SCALE ANALYSIS]</scope>
    <source>
        <tissue>Embryo</tissue>
    </source>
</reference>
<reference key="9">
    <citation type="journal article" date="2020" name="Science">
        <title>The ZSWIM8 ubiquitin ligase mediates target-directed microRNA degradation.</title>
        <authorList>
            <person name="Shi C.Y."/>
            <person name="Kingston E.R."/>
            <person name="Kleaveland B."/>
            <person name="Lin D.H."/>
            <person name="Stubna M.W."/>
            <person name="Bartel D.P."/>
        </authorList>
    </citation>
    <scope>FUNCTION</scope>
</reference>
<reference key="10">
    <citation type="journal article" date="2023" name="Cereb. Cortex">
        <title>The ZSWIM8 ubiquitin ligase regulates neurodevelopment by guarding the protein quality of intrinsically disordered Dab1.</title>
        <authorList>
            <person name="Wang G."/>
            <person name="Lei J."/>
            <person name="Wang Y."/>
            <person name="Yu J."/>
            <person name="He Y."/>
            <person name="Zhao W."/>
            <person name="Hu Z."/>
            <person name="Xu Z."/>
            <person name="Jin Y."/>
            <person name="Gu Y."/>
            <person name="Guo X."/>
            <person name="Yang B."/>
            <person name="Gao Z."/>
            <person name="Wang Z."/>
        </authorList>
    </citation>
    <scope>FUNCTION</scope>
    <scope>SUBCELLULAR LOCATION</scope>
    <scope>INTERACTION WITH DAB1</scope>
</reference>
<reference key="11">
    <citation type="journal article" date="2023" name="Genome Res.">
        <title>ZSWIM8 destabilizes many murine microRNAs and is required for proper embryonic growth and development.</title>
        <authorList>
            <person name="Shi C.Y."/>
            <person name="Elcavage L.E."/>
            <person name="Chivukula R.R."/>
            <person name="Stefano J."/>
            <person name="Kleaveland B."/>
            <person name="Bartel D.P."/>
        </authorList>
    </citation>
    <scope>FUNCTION</scope>
    <scope>DISRUPTION PHENOTYPE</scope>
</reference>